<comment type="function">
    <text evidence="2">Forms a water-specific channel that provides the plasma membranes of renal collecting duct with high permeability to water, thereby permitting water to move in the direction of an osmotic gradient. Could also be permeable to glycerol (By similarity).</text>
</comment>
<comment type="catalytic activity">
    <reaction evidence="2">
        <text>H2O(in) = H2O(out)</text>
        <dbReference type="Rhea" id="RHEA:29667"/>
        <dbReference type="ChEBI" id="CHEBI:15377"/>
    </reaction>
</comment>
<comment type="catalytic activity">
    <reaction evidence="2">
        <text>glycerol(in) = glycerol(out)</text>
        <dbReference type="Rhea" id="RHEA:29675"/>
        <dbReference type="ChEBI" id="CHEBI:17754"/>
    </reaction>
</comment>
<comment type="subunit">
    <text evidence="2">Homotetramer.</text>
</comment>
<comment type="subcellular location">
    <subcellularLocation>
        <location evidence="2">Apical cell membrane</location>
        <topology evidence="2">Multi-pass membrane protein</topology>
    </subcellularLocation>
    <subcellularLocation>
        <location evidence="1">Basolateral cell membrane</location>
        <topology evidence="2">Multi-pass membrane protein</topology>
    </subcellularLocation>
    <subcellularLocation>
        <location evidence="2">Cell membrane</location>
        <topology evidence="2">Multi-pass membrane protein</topology>
    </subcellularLocation>
    <subcellularLocation>
        <location evidence="2">Cytoplasmic vesicle membrane</location>
        <topology evidence="2">Multi-pass membrane protein</topology>
    </subcellularLocation>
    <subcellularLocation>
        <location evidence="2">Golgi apparatus</location>
        <location evidence="2">trans-Golgi network membrane</location>
        <topology evidence="2">Multi-pass membrane protein</topology>
    </subcellularLocation>
    <text evidence="2">Shuttles from vesicles to the apical membrane. Vasopressin-regulated phosphorylation is required for translocation to the apical cell membrane. PLEKHA8/FAPP2 is required to transport AQP2 from the TGN to sites where AQP2 is phosphorylated.</text>
</comment>
<comment type="domain">
    <text evidence="2">Aquaporins contain two tandem repeats each containing three membrane-spanning domains and a pore-forming loop with the signature motif Asn-Pro-Ala (NPA).</text>
</comment>
<comment type="PTM">
    <text evidence="2">Ser-256 phosphorylation is necessary and sufficient for expression at the apical membrane. Endocytosis is not phosphorylation-dependent.</text>
</comment>
<comment type="PTM">
    <text evidence="2">N-glycosylated.</text>
</comment>
<comment type="similarity">
    <text evidence="6">Belongs to the MIP/aquaporin (TC 1.A.8) family.</text>
</comment>
<protein>
    <recommendedName>
        <fullName evidence="5">Aquaporin-2</fullName>
        <shortName>AQP-2</shortName>
    </recommendedName>
    <alternativeName>
        <fullName>ADH water channel</fullName>
    </alternativeName>
    <alternativeName>
        <fullName>Aquaporin-CD</fullName>
        <shortName>AQP-CD</shortName>
    </alternativeName>
    <alternativeName>
        <fullName>Collecting duct water channel protein</fullName>
    </alternativeName>
    <alternativeName>
        <fullName>WCH-CD</fullName>
    </alternativeName>
    <alternativeName>
        <fullName>Water channel protein for renal collecting duct</fullName>
    </alternativeName>
</protein>
<gene>
    <name evidence="2" type="primary">AQP2</name>
</gene>
<sequence>MWELRSIAFSRAVLAEFLATLLFVFFGLGSALNWPQALPSVLQIAMAFGLAIGTLVQALGHVSGAHINPAVTVACLVGCHVSFLRAVFYVAAQLLGAVAGAALLHEITPPAIRGDLAVNALNNNSTAGQAVTVELFLTLQLVLCIFASTDERRGDNVGTPALSIGFSVALGHLLGIHYTGCSMNPARSLAPAIVTGKFDDHWVFWIGPLVGAIVASLLYNYVLFPPAKSLSERLAVLKGLEPDTDWEEREVRRRQSVELHSPQSLPRGSKA</sequence>
<feature type="chain" id="PRO_0000063927" description="Aquaporin-2">
    <location>
        <begin position="1"/>
        <end position="271"/>
    </location>
</feature>
<feature type="topological domain" description="Cytoplasmic" evidence="6">
    <location>
        <begin position="1"/>
        <end position="11"/>
    </location>
</feature>
<feature type="transmembrane region" description="Helical" evidence="2">
    <location>
        <begin position="12"/>
        <end position="32"/>
    </location>
</feature>
<feature type="topological domain" description="Extracellular" evidence="6">
    <location>
        <begin position="33"/>
        <end position="40"/>
    </location>
</feature>
<feature type="transmembrane region" description="Helical" evidence="2">
    <location>
        <begin position="41"/>
        <end position="59"/>
    </location>
</feature>
<feature type="topological domain" description="Cytoplasmic" evidence="6">
    <location>
        <begin position="60"/>
        <end position="64"/>
    </location>
</feature>
<feature type="intramembrane region" description="Discontinuously helical" evidence="2">
    <location>
        <begin position="65"/>
        <end position="74"/>
    </location>
</feature>
<feature type="topological domain" description="Cytoplasmic" evidence="6">
    <location>
        <begin position="75"/>
        <end position="85"/>
    </location>
</feature>
<feature type="transmembrane region" description="Helical" evidence="2">
    <location>
        <begin position="86"/>
        <end position="107"/>
    </location>
</feature>
<feature type="topological domain" description="Extracellular" evidence="6">
    <location>
        <begin position="108"/>
        <end position="127"/>
    </location>
</feature>
<feature type="transmembrane region" description="Helical" evidence="2">
    <location>
        <begin position="128"/>
        <end position="148"/>
    </location>
</feature>
<feature type="topological domain" description="Cytoplasmic" evidence="6">
    <location>
        <begin position="149"/>
        <end position="156"/>
    </location>
</feature>
<feature type="transmembrane region" description="Helical" evidence="2">
    <location>
        <begin position="157"/>
        <end position="176"/>
    </location>
</feature>
<feature type="topological domain" description="Extracellular" evidence="6">
    <location>
        <begin position="177"/>
        <end position="180"/>
    </location>
</feature>
<feature type="intramembrane region" description="Discontinuously helical" evidence="2">
    <location>
        <begin position="181"/>
        <end position="193"/>
    </location>
</feature>
<feature type="topological domain" description="Extracellular" evidence="6">
    <location>
        <begin position="194"/>
        <end position="201"/>
    </location>
</feature>
<feature type="transmembrane region" description="Helical" evidence="2">
    <location>
        <begin position="202"/>
        <end position="222"/>
    </location>
</feature>
<feature type="topological domain" description="Cytoplasmic" evidence="6">
    <location>
        <begin position="223"/>
        <end position="271"/>
    </location>
</feature>
<feature type="region of interest" description="Disordered" evidence="4">
    <location>
        <begin position="251"/>
        <end position="271"/>
    </location>
</feature>
<feature type="short sequence motif" description="NPA 1" evidence="2">
    <location>
        <begin position="68"/>
        <end position="70"/>
    </location>
</feature>
<feature type="short sequence motif" description="NPA 2" evidence="2">
    <location>
        <begin position="184"/>
        <end position="186"/>
    </location>
</feature>
<feature type="compositionally biased region" description="Polar residues" evidence="4">
    <location>
        <begin position="261"/>
        <end position="271"/>
    </location>
</feature>
<feature type="modified residue" description="Phosphoserine" evidence="2">
    <location>
        <position position="256"/>
    </location>
</feature>
<feature type="glycosylation site" description="N-linked (GlcNAc...) asparagine" evidence="3">
    <location>
        <position position="123"/>
    </location>
</feature>
<proteinExistence type="evidence at transcript level"/>
<accession>P79099</accession>
<accession>A7MBE5</accession>
<keyword id="KW-1003">Cell membrane</keyword>
<keyword id="KW-0968">Cytoplasmic vesicle</keyword>
<keyword id="KW-0325">Glycoprotein</keyword>
<keyword id="KW-0333">Golgi apparatus</keyword>
<keyword id="KW-0472">Membrane</keyword>
<keyword id="KW-0597">Phosphoprotein</keyword>
<keyword id="KW-1185">Reference proteome</keyword>
<keyword id="KW-0677">Repeat</keyword>
<keyword id="KW-0812">Transmembrane</keyword>
<keyword id="KW-1133">Transmembrane helix</keyword>
<keyword id="KW-0813">Transport</keyword>
<reference key="1">
    <citation type="submission" date="2007-07" db="EMBL/GenBank/DDBJ databases">
        <authorList>
            <consortium name="NIH - Mammalian Gene Collection (MGC) project"/>
        </authorList>
    </citation>
    <scope>NUCLEOTIDE SEQUENCE [LARGE SCALE MRNA]</scope>
    <source>
        <strain>Hereford</strain>
        <tissue>Kidney</tissue>
    </source>
</reference>
<reference key="2">
    <citation type="journal article" date="1997" name="Mol. Biol. Evol.">
        <title>Molecular evolution of mammalian aquaporin-2: further evidence that elephant shrew and aardvark join the paenungulate clade.</title>
        <authorList>
            <person name="Madsen O.J."/>
            <person name="Deen P.M.T."/>
            <person name="Pesole G."/>
            <person name="Saccone C."/>
            <person name="de Jong W.W."/>
        </authorList>
    </citation>
    <scope>NUCLEOTIDE SEQUENCE [GENOMIC DNA] OF 6-114</scope>
</reference>
<name>AQP2_BOVIN</name>
<evidence type="ECO:0000250" key="1">
    <source>
        <dbReference type="UniProtKB" id="P34080"/>
    </source>
</evidence>
<evidence type="ECO:0000250" key="2">
    <source>
        <dbReference type="UniProtKB" id="P41181"/>
    </source>
</evidence>
<evidence type="ECO:0000255" key="3"/>
<evidence type="ECO:0000256" key="4">
    <source>
        <dbReference type="SAM" id="MobiDB-lite"/>
    </source>
</evidence>
<evidence type="ECO:0000303" key="5">
    <source>
    </source>
</evidence>
<evidence type="ECO:0000305" key="6"/>
<dbReference type="EMBL" id="BC151512">
    <property type="protein sequence ID" value="AAI51513.1"/>
    <property type="molecule type" value="mRNA"/>
</dbReference>
<dbReference type="EMBL" id="Y10633">
    <property type="protein sequence ID" value="CAA71658.1"/>
    <property type="molecule type" value="Genomic_DNA"/>
</dbReference>
<dbReference type="RefSeq" id="NP_001094669.1">
    <property type="nucleotide sequence ID" value="NM_001101199.1"/>
</dbReference>
<dbReference type="SMR" id="P79099"/>
<dbReference type="FunCoup" id="P79099">
    <property type="interactions" value="119"/>
</dbReference>
<dbReference type="STRING" id="9913.ENSBTAP00000011024"/>
<dbReference type="GlyCosmos" id="P79099">
    <property type="glycosylation" value="1 site, No reported glycans"/>
</dbReference>
<dbReference type="GlyGen" id="P79099">
    <property type="glycosylation" value="1 site"/>
</dbReference>
<dbReference type="PaxDb" id="9913-ENSBTAP00000011024"/>
<dbReference type="Ensembl" id="ENSBTAT00000011024.5">
    <property type="protein sequence ID" value="ENSBTAP00000011024.4"/>
    <property type="gene ID" value="ENSBTAG00000008374.5"/>
</dbReference>
<dbReference type="GeneID" id="539870"/>
<dbReference type="KEGG" id="bta:539870"/>
<dbReference type="CTD" id="359"/>
<dbReference type="VEuPathDB" id="HostDB:ENSBTAG00000008374"/>
<dbReference type="VGNC" id="VGNC:26046">
    <property type="gene designation" value="AQP2"/>
</dbReference>
<dbReference type="eggNOG" id="KOG0223">
    <property type="taxonomic scope" value="Eukaryota"/>
</dbReference>
<dbReference type="GeneTree" id="ENSGT00940000160612"/>
<dbReference type="HOGENOM" id="CLU_020019_3_3_1"/>
<dbReference type="InParanoid" id="P79099"/>
<dbReference type="OMA" id="RAFLYWI"/>
<dbReference type="OrthoDB" id="3222at2759"/>
<dbReference type="TreeFam" id="TF312940"/>
<dbReference type="Reactome" id="R-BTA-432040">
    <property type="pathway name" value="Vasopressin regulates renal water homeostasis via Aquaporins"/>
</dbReference>
<dbReference type="Reactome" id="R-BTA-432047">
    <property type="pathway name" value="Passive transport by Aquaporins"/>
</dbReference>
<dbReference type="Proteomes" id="UP000009136">
    <property type="component" value="Chromosome 5"/>
</dbReference>
<dbReference type="Bgee" id="ENSBTAG00000008374">
    <property type="expression patterns" value="Expressed in adult mammalian kidney and 17 other cell types or tissues"/>
</dbReference>
<dbReference type="GO" id="GO:0016324">
    <property type="term" value="C:apical plasma membrane"/>
    <property type="evidence" value="ECO:0000250"/>
    <property type="project" value="UniProtKB"/>
</dbReference>
<dbReference type="GO" id="GO:0016323">
    <property type="term" value="C:basolateral plasma membrane"/>
    <property type="evidence" value="ECO:0007669"/>
    <property type="project" value="UniProtKB-SubCell"/>
</dbReference>
<dbReference type="GO" id="GO:0030659">
    <property type="term" value="C:cytoplasmic vesicle membrane"/>
    <property type="evidence" value="ECO:0007669"/>
    <property type="project" value="UniProtKB-SubCell"/>
</dbReference>
<dbReference type="GO" id="GO:0070062">
    <property type="term" value="C:extracellular exosome"/>
    <property type="evidence" value="ECO:0007669"/>
    <property type="project" value="Ensembl"/>
</dbReference>
<dbReference type="GO" id="GO:0005794">
    <property type="term" value="C:Golgi apparatus"/>
    <property type="evidence" value="ECO:0007669"/>
    <property type="project" value="UniProtKB-SubCell"/>
</dbReference>
<dbReference type="GO" id="GO:0098576">
    <property type="term" value="C:lumenal side of membrane"/>
    <property type="evidence" value="ECO:0007669"/>
    <property type="project" value="Ensembl"/>
</dbReference>
<dbReference type="GO" id="GO:0048471">
    <property type="term" value="C:perinuclear region of cytoplasm"/>
    <property type="evidence" value="ECO:0007669"/>
    <property type="project" value="Ensembl"/>
</dbReference>
<dbReference type="GO" id="GO:0005886">
    <property type="term" value="C:plasma membrane"/>
    <property type="evidence" value="ECO:0000250"/>
    <property type="project" value="UniProtKB"/>
</dbReference>
<dbReference type="GO" id="GO:0055037">
    <property type="term" value="C:recycling endosome"/>
    <property type="evidence" value="ECO:0007669"/>
    <property type="project" value="Ensembl"/>
</dbReference>
<dbReference type="GO" id="GO:0015168">
    <property type="term" value="F:glycerol transmembrane transporter activity"/>
    <property type="evidence" value="ECO:0007669"/>
    <property type="project" value="Ensembl"/>
</dbReference>
<dbReference type="GO" id="GO:0015250">
    <property type="term" value="F:water channel activity"/>
    <property type="evidence" value="ECO:0000250"/>
    <property type="project" value="UniProtKB"/>
</dbReference>
<dbReference type="GO" id="GO:0007015">
    <property type="term" value="P:actin filament organization"/>
    <property type="evidence" value="ECO:0007669"/>
    <property type="project" value="Ensembl"/>
</dbReference>
<dbReference type="GO" id="GO:0071280">
    <property type="term" value="P:cellular response to copper ion"/>
    <property type="evidence" value="ECO:0007669"/>
    <property type="project" value="Ensembl"/>
</dbReference>
<dbReference type="GO" id="GO:0071288">
    <property type="term" value="P:cellular response to mercury ion"/>
    <property type="evidence" value="ECO:0007669"/>
    <property type="project" value="Ensembl"/>
</dbReference>
<dbReference type="GO" id="GO:0042631">
    <property type="term" value="P:cellular response to water deprivation"/>
    <property type="evidence" value="ECO:0007669"/>
    <property type="project" value="Ensembl"/>
</dbReference>
<dbReference type="GO" id="GO:0072205">
    <property type="term" value="P:metanephric collecting duct development"/>
    <property type="evidence" value="ECO:0007669"/>
    <property type="project" value="Ensembl"/>
</dbReference>
<dbReference type="GO" id="GO:0051289">
    <property type="term" value="P:protein homotetramerization"/>
    <property type="evidence" value="ECO:0000250"/>
    <property type="project" value="UniProtKB"/>
</dbReference>
<dbReference type="GO" id="GO:0003097">
    <property type="term" value="P:renal water transport"/>
    <property type="evidence" value="ECO:0007669"/>
    <property type="project" value="Ensembl"/>
</dbReference>
<dbReference type="GO" id="GO:0006833">
    <property type="term" value="P:water transport"/>
    <property type="evidence" value="ECO:0000250"/>
    <property type="project" value="UniProtKB"/>
</dbReference>
<dbReference type="CDD" id="cd00333">
    <property type="entry name" value="MIP"/>
    <property type="match status" value="1"/>
</dbReference>
<dbReference type="FunFam" id="1.20.1080.10:FF:000003">
    <property type="entry name" value="Lens fiber major intrinsic"/>
    <property type="match status" value="1"/>
</dbReference>
<dbReference type="Gene3D" id="1.20.1080.10">
    <property type="entry name" value="Glycerol uptake facilitator protein"/>
    <property type="match status" value="1"/>
</dbReference>
<dbReference type="InterPro" id="IPR023271">
    <property type="entry name" value="Aquaporin-like"/>
</dbReference>
<dbReference type="InterPro" id="IPR034294">
    <property type="entry name" value="Aquaporin_transptr"/>
</dbReference>
<dbReference type="InterPro" id="IPR000425">
    <property type="entry name" value="MIP"/>
</dbReference>
<dbReference type="InterPro" id="IPR022357">
    <property type="entry name" value="MIP_CS"/>
</dbReference>
<dbReference type="NCBIfam" id="TIGR00861">
    <property type="entry name" value="MIP"/>
    <property type="match status" value="1"/>
</dbReference>
<dbReference type="PANTHER" id="PTHR19139">
    <property type="entry name" value="AQUAPORIN TRANSPORTER"/>
    <property type="match status" value="1"/>
</dbReference>
<dbReference type="PANTHER" id="PTHR19139:SF45">
    <property type="entry name" value="AQUAPORIN-2"/>
    <property type="match status" value="1"/>
</dbReference>
<dbReference type="Pfam" id="PF00230">
    <property type="entry name" value="MIP"/>
    <property type="match status" value="1"/>
</dbReference>
<dbReference type="PRINTS" id="PR02014">
    <property type="entry name" value="AQUAPORIN2"/>
</dbReference>
<dbReference type="PRINTS" id="PR00783">
    <property type="entry name" value="MINTRINSICP"/>
</dbReference>
<dbReference type="SUPFAM" id="SSF81338">
    <property type="entry name" value="Aquaporin-like"/>
    <property type="match status" value="1"/>
</dbReference>
<dbReference type="PROSITE" id="PS00221">
    <property type="entry name" value="MIP"/>
    <property type="match status" value="1"/>
</dbReference>
<organism>
    <name type="scientific">Bos taurus</name>
    <name type="common">Bovine</name>
    <dbReference type="NCBI Taxonomy" id="9913"/>
    <lineage>
        <taxon>Eukaryota</taxon>
        <taxon>Metazoa</taxon>
        <taxon>Chordata</taxon>
        <taxon>Craniata</taxon>
        <taxon>Vertebrata</taxon>
        <taxon>Euteleostomi</taxon>
        <taxon>Mammalia</taxon>
        <taxon>Eutheria</taxon>
        <taxon>Laurasiatheria</taxon>
        <taxon>Artiodactyla</taxon>
        <taxon>Ruminantia</taxon>
        <taxon>Pecora</taxon>
        <taxon>Bovidae</taxon>
        <taxon>Bovinae</taxon>
        <taxon>Bos</taxon>
    </lineage>
</organism>